<reference key="1">
    <citation type="journal article" date="2004" name="Science">
        <title>A predator unmasked: life cycle of Bdellovibrio bacteriovorus from a genomic perspective.</title>
        <authorList>
            <person name="Rendulic S."/>
            <person name="Jagtap P."/>
            <person name="Rosinus A."/>
            <person name="Eppinger M."/>
            <person name="Baar C."/>
            <person name="Lanz C."/>
            <person name="Keller H."/>
            <person name="Lambert C."/>
            <person name="Evans K.J."/>
            <person name="Goesmann A."/>
            <person name="Meyer F."/>
            <person name="Sockett R.E."/>
            <person name="Schuster S.C."/>
        </authorList>
    </citation>
    <scope>NUCLEOTIDE SEQUENCE [LARGE SCALE GENOMIC DNA]</scope>
    <source>
        <strain>ATCC 15356 / DSM 50701 / NCIMB 9529 / HD100</strain>
    </source>
</reference>
<organism>
    <name type="scientific">Bdellovibrio bacteriovorus (strain ATCC 15356 / DSM 50701 / NCIMB 9529 / HD100)</name>
    <dbReference type="NCBI Taxonomy" id="264462"/>
    <lineage>
        <taxon>Bacteria</taxon>
        <taxon>Pseudomonadati</taxon>
        <taxon>Bdellovibrionota</taxon>
        <taxon>Bdellovibrionia</taxon>
        <taxon>Bdellovibrionales</taxon>
        <taxon>Pseudobdellovibrionaceae</taxon>
        <taxon>Bdellovibrio</taxon>
    </lineage>
</organism>
<comment type="function">
    <text evidence="1">Catalyzes the transfer of a dimethylallyl group onto the adenine at position 37 in tRNAs that read codons beginning with uridine, leading to the formation of N6-(dimethylallyl)adenosine (i(6)A).</text>
</comment>
<comment type="catalytic activity">
    <reaction evidence="1">
        <text>adenosine(37) in tRNA + dimethylallyl diphosphate = N(6)-dimethylallyladenosine(37) in tRNA + diphosphate</text>
        <dbReference type="Rhea" id="RHEA:26482"/>
        <dbReference type="Rhea" id="RHEA-COMP:10162"/>
        <dbReference type="Rhea" id="RHEA-COMP:10375"/>
        <dbReference type="ChEBI" id="CHEBI:33019"/>
        <dbReference type="ChEBI" id="CHEBI:57623"/>
        <dbReference type="ChEBI" id="CHEBI:74411"/>
        <dbReference type="ChEBI" id="CHEBI:74415"/>
        <dbReference type="EC" id="2.5.1.75"/>
    </reaction>
</comment>
<comment type="cofactor">
    <cofactor evidence="1">
        <name>Mg(2+)</name>
        <dbReference type="ChEBI" id="CHEBI:18420"/>
    </cofactor>
</comment>
<comment type="subunit">
    <text evidence="1">Monomer.</text>
</comment>
<comment type="similarity">
    <text evidence="1">Belongs to the IPP transferase family.</text>
</comment>
<feature type="chain" id="PRO_0000163880" description="tRNA dimethylallyltransferase">
    <location>
        <begin position="1"/>
        <end position="308"/>
    </location>
</feature>
<feature type="region of interest" description="Interaction with substrate tRNA" evidence="1">
    <location>
        <begin position="36"/>
        <end position="39"/>
    </location>
</feature>
<feature type="binding site" evidence="1">
    <location>
        <begin position="11"/>
        <end position="18"/>
    </location>
    <ligand>
        <name>ATP</name>
        <dbReference type="ChEBI" id="CHEBI:30616"/>
    </ligand>
</feature>
<feature type="binding site" evidence="1">
    <location>
        <begin position="13"/>
        <end position="18"/>
    </location>
    <ligand>
        <name>substrate</name>
    </ligand>
</feature>
<feature type="site" description="Interaction with substrate tRNA" evidence="1">
    <location>
        <position position="101"/>
    </location>
</feature>
<gene>
    <name evidence="1" type="primary">miaA</name>
    <name type="ordered locus">Bd1565</name>
</gene>
<dbReference type="EC" id="2.5.1.75" evidence="1"/>
<dbReference type="EMBL" id="BX842650">
    <property type="protein sequence ID" value="CAE79444.1"/>
    <property type="molecule type" value="Genomic_DNA"/>
</dbReference>
<dbReference type="RefSeq" id="WP_011164046.1">
    <property type="nucleotide sequence ID" value="NC_005363.1"/>
</dbReference>
<dbReference type="SMR" id="Q6MMQ9"/>
<dbReference type="STRING" id="264462.Bd1565"/>
<dbReference type="GeneID" id="93012561"/>
<dbReference type="KEGG" id="bba:Bd1565"/>
<dbReference type="eggNOG" id="COG0324">
    <property type="taxonomic scope" value="Bacteria"/>
</dbReference>
<dbReference type="HOGENOM" id="CLU_032616_0_1_7"/>
<dbReference type="Proteomes" id="UP000008080">
    <property type="component" value="Chromosome"/>
</dbReference>
<dbReference type="GO" id="GO:0005524">
    <property type="term" value="F:ATP binding"/>
    <property type="evidence" value="ECO:0007669"/>
    <property type="project" value="UniProtKB-UniRule"/>
</dbReference>
<dbReference type="GO" id="GO:0052381">
    <property type="term" value="F:tRNA dimethylallyltransferase activity"/>
    <property type="evidence" value="ECO:0007669"/>
    <property type="project" value="UniProtKB-UniRule"/>
</dbReference>
<dbReference type="GO" id="GO:0006400">
    <property type="term" value="P:tRNA modification"/>
    <property type="evidence" value="ECO:0007669"/>
    <property type="project" value="TreeGrafter"/>
</dbReference>
<dbReference type="Gene3D" id="1.10.20.140">
    <property type="match status" value="1"/>
</dbReference>
<dbReference type="Gene3D" id="3.40.50.300">
    <property type="entry name" value="P-loop containing nucleotide triphosphate hydrolases"/>
    <property type="match status" value="1"/>
</dbReference>
<dbReference type="HAMAP" id="MF_00185">
    <property type="entry name" value="IPP_trans"/>
    <property type="match status" value="1"/>
</dbReference>
<dbReference type="InterPro" id="IPR039657">
    <property type="entry name" value="Dimethylallyltransferase"/>
</dbReference>
<dbReference type="InterPro" id="IPR018022">
    <property type="entry name" value="IPT"/>
</dbReference>
<dbReference type="InterPro" id="IPR027417">
    <property type="entry name" value="P-loop_NTPase"/>
</dbReference>
<dbReference type="NCBIfam" id="TIGR00174">
    <property type="entry name" value="miaA"/>
    <property type="match status" value="1"/>
</dbReference>
<dbReference type="PANTHER" id="PTHR11088">
    <property type="entry name" value="TRNA DIMETHYLALLYLTRANSFERASE"/>
    <property type="match status" value="1"/>
</dbReference>
<dbReference type="PANTHER" id="PTHR11088:SF60">
    <property type="entry name" value="TRNA DIMETHYLALLYLTRANSFERASE"/>
    <property type="match status" value="1"/>
</dbReference>
<dbReference type="Pfam" id="PF01715">
    <property type="entry name" value="IPPT"/>
    <property type="match status" value="1"/>
</dbReference>
<dbReference type="SUPFAM" id="SSF52540">
    <property type="entry name" value="P-loop containing nucleoside triphosphate hydrolases"/>
    <property type="match status" value="2"/>
</dbReference>
<sequence>MAKRHVIFVVGSTATGKSEWALKLAQEFNGVIVNCDSVQLYKKLDIGSAKPSKAEQALVPHYLLDYVNPPEEMTAGNYCRDFYAILEEIPADKPVFVVGGTGFYFMAIEKGMYPVIPVPVEIQAQVALELETEEGAIRLHAEMMKADPEYGAKIHLADRYRIGRAIELIRSQGKSVTQIQAEFESQRKPFPFPLLKIGPSWDREVLRERIGQRVEKMLAAGLIEEVQGLLDEGLASWAPISSVGYKETLEYLRGGISLSQLQEEITTNTHQLAKRQRTWFQRDKDIQWFDGASGFAEVRTVVEKFLKP</sequence>
<accession>Q6MMQ9</accession>
<protein>
    <recommendedName>
        <fullName evidence="1">tRNA dimethylallyltransferase</fullName>
        <ecNumber evidence="1">2.5.1.75</ecNumber>
    </recommendedName>
    <alternativeName>
        <fullName evidence="1">Dimethylallyl diphosphate:tRNA dimethylallyltransferase</fullName>
        <shortName evidence="1">DMAPP:tRNA dimethylallyltransferase</shortName>
        <shortName evidence="1">DMATase</shortName>
    </alternativeName>
    <alternativeName>
        <fullName evidence="1">Isopentenyl-diphosphate:tRNA isopentenyltransferase</fullName>
        <shortName evidence="1">IPP transferase</shortName>
        <shortName evidence="1">IPPT</shortName>
        <shortName evidence="1">IPTase</shortName>
    </alternativeName>
</protein>
<name>MIAA_BDEBA</name>
<proteinExistence type="inferred from homology"/>
<keyword id="KW-0067">ATP-binding</keyword>
<keyword id="KW-0460">Magnesium</keyword>
<keyword id="KW-0547">Nucleotide-binding</keyword>
<keyword id="KW-1185">Reference proteome</keyword>
<keyword id="KW-0808">Transferase</keyword>
<keyword id="KW-0819">tRNA processing</keyword>
<evidence type="ECO:0000255" key="1">
    <source>
        <dbReference type="HAMAP-Rule" id="MF_00185"/>
    </source>
</evidence>